<feature type="chain" id="PRO_0000128638" description="Polyphosphate kinase 1">
    <location>
        <begin position="1"/>
        <end position="698"/>
    </location>
</feature>
<feature type="active site" description="Phosphohistidine intermediate" evidence="1">
    <location>
        <position position="437"/>
    </location>
</feature>
<feature type="binding site" evidence="1">
    <location>
        <position position="46"/>
    </location>
    <ligand>
        <name>ATP</name>
        <dbReference type="ChEBI" id="CHEBI:30616"/>
    </ligand>
</feature>
<feature type="binding site" evidence="1">
    <location>
        <position position="377"/>
    </location>
    <ligand>
        <name>Mg(2+)</name>
        <dbReference type="ChEBI" id="CHEBI:18420"/>
    </ligand>
</feature>
<feature type="binding site" evidence="1">
    <location>
        <position position="407"/>
    </location>
    <ligand>
        <name>Mg(2+)</name>
        <dbReference type="ChEBI" id="CHEBI:18420"/>
    </ligand>
</feature>
<feature type="binding site" evidence="1">
    <location>
        <position position="470"/>
    </location>
    <ligand>
        <name>ATP</name>
        <dbReference type="ChEBI" id="CHEBI:30616"/>
    </ligand>
</feature>
<feature type="binding site" evidence="1">
    <location>
        <position position="566"/>
    </location>
    <ligand>
        <name>ATP</name>
        <dbReference type="ChEBI" id="CHEBI:30616"/>
    </ligand>
</feature>
<feature type="binding site" evidence="1">
    <location>
        <position position="594"/>
    </location>
    <ligand>
        <name>ATP</name>
        <dbReference type="ChEBI" id="CHEBI:30616"/>
    </ligand>
</feature>
<name>PPK11_CHLTE</name>
<dbReference type="EC" id="2.7.4.1" evidence="1"/>
<dbReference type="EMBL" id="AE006470">
    <property type="protein sequence ID" value="AAM72122.1"/>
    <property type="molecule type" value="Genomic_DNA"/>
</dbReference>
<dbReference type="RefSeq" id="NP_661780.1">
    <property type="nucleotide sequence ID" value="NC_002932.3"/>
</dbReference>
<dbReference type="SMR" id="P58991"/>
<dbReference type="STRING" id="194439.CT0887"/>
<dbReference type="EnsemblBacteria" id="AAM72122">
    <property type="protein sequence ID" value="AAM72122"/>
    <property type="gene ID" value="CT0887"/>
</dbReference>
<dbReference type="KEGG" id="cte:CT0887"/>
<dbReference type="PATRIC" id="fig|194439.7.peg.804"/>
<dbReference type="eggNOG" id="COG0855">
    <property type="taxonomic scope" value="Bacteria"/>
</dbReference>
<dbReference type="HOGENOM" id="CLU_009678_5_0_10"/>
<dbReference type="OrthoDB" id="9761456at2"/>
<dbReference type="Proteomes" id="UP000001007">
    <property type="component" value="Chromosome"/>
</dbReference>
<dbReference type="GO" id="GO:0009358">
    <property type="term" value="C:polyphosphate kinase complex"/>
    <property type="evidence" value="ECO:0007669"/>
    <property type="project" value="InterPro"/>
</dbReference>
<dbReference type="GO" id="GO:0005524">
    <property type="term" value="F:ATP binding"/>
    <property type="evidence" value="ECO:0007669"/>
    <property type="project" value="UniProtKB-KW"/>
</dbReference>
<dbReference type="GO" id="GO:0046872">
    <property type="term" value="F:metal ion binding"/>
    <property type="evidence" value="ECO:0007669"/>
    <property type="project" value="UniProtKB-KW"/>
</dbReference>
<dbReference type="GO" id="GO:0008976">
    <property type="term" value="F:polyphosphate kinase activity"/>
    <property type="evidence" value="ECO:0007669"/>
    <property type="project" value="UniProtKB-UniRule"/>
</dbReference>
<dbReference type="GO" id="GO:0006799">
    <property type="term" value="P:polyphosphate biosynthetic process"/>
    <property type="evidence" value="ECO:0007669"/>
    <property type="project" value="UniProtKB-UniRule"/>
</dbReference>
<dbReference type="CDD" id="cd09165">
    <property type="entry name" value="PLDc_PaPPK1_C1_like"/>
    <property type="match status" value="1"/>
</dbReference>
<dbReference type="CDD" id="cd09168">
    <property type="entry name" value="PLDc_PaPPK1_C2_like"/>
    <property type="match status" value="1"/>
</dbReference>
<dbReference type="Gene3D" id="3.30.870.10">
    <property type="entry name" value="Endonuclease Chain A"/>
    <property type="match status" value="2"/>
</dbReference>
<dbReference type="Gene3D" id="3.30.1840.10">
    <property type="entry name" value="Polyphosphate kinase middle domain"/>
    <property type="match status" value="1"/>
</dbReference>
<dbReference type="Gene3D" id="1.20.58.310">
    <property type="entry name" value="Polyphosphate kinase N-terminal domain"/>
    <property type="match status" value="1"/>
</dbReference>
<dbReference type="HAMAP" id="MF_00347">
    <property type="entry name" value="Polyphosphate_kinase"/>
    <property type="match status" value="1"/>
</dbReference>
<dbReference type="InterPro" id="IPR003414">
    <property type="entry name" value="PP_kinase"/>
</dbReference>
<dbReference type="InterPro" id="IPR041108">
    <property type="entry name" value="PP_kinase_C_1"/>
</dbReference>
<dbReference type="InterPro" id="IPR024953">
    <property type="entry name" value="PP_kinase_middle"/>
</dbReference>
<dbReference type="InterPro" id="IPR036830">
    <property type="entry name" value="PP_kinase_middle_dom_sf"/>
</dbReference>
<dbReference type="InterPro" id="IPR025200">
    <property type="entry name" value="PPK_C_dom2"/>
</dbReference>
<dbReference type="InterPro" id="IPR025198">
    <property type="entry name" value="PPK_N_dom"/>
</dbReference>
<dbReference type="InterPro" id="IPR036832">
    <property type="entry name" value="PPK_N_dom_sf"/>
</dbReference>
<dbReference type="NCBIfam" id="TIGR03705">
    <property type="entry name" value="poly_P_kin"/>
    <property type="match status" value="1"/>
</dbReference>
<dbReference type="NCBIfam" id="NF003917">
    <property type="entry name" value="PRK05443.1-1"/>
    <property type="match status" value="1"/>
</dbReference>
<dbReference type="NCBIfam" id="NF003918">
    <property type="entry name" value="PRK05443.1-2"/>
    <property type="match status" value="1"/>
</dbReference>
<dbReference type="NCBIfam" id="NF003921">
    <property type="entry name" value="PRK05443.2-2"/>
    <property type="match status" value="1"/>
</dbReference>
<dbReference type="PANTHER" id="PTHR30218">
    <property type="entry name" value="POLYPHOSPHATE KINASE"/>
    <property type="match status" value="1"/>
</dbReference>
<dbReference type="PANTHER" id="PTHR30218:SF0">
    <property type="entry name" value="POLYPHOSPHATE KINASE"/>
    <property type="match status" value="1"/>
</dbReference>
<dbReference type="Pfam" id="PF02503">
    <property type="entry name" value="PP_kinase"/>
    <property type="match status" value="1"/>
</dbReference>
<dbReference type="Pfam" id="PF13090">
    <property type="entry name" value="PP_kinase_C"/>
    <property type="match status" value="1"/>
</dbReference>
<dbReference type="Pfam" id="PF17941">
    <property type="entry name" value="PP_kinase_C_1"/>
    <property type="match status" value="1"/>
</dbReference>
<dbReference type="Pfam" id="PF13089">
    <property type="entry name" value="PP_kinase_N"/>
    <property type="match status" value="1"/>
</dbReference>
<dbReference type="PIRSF" id="PIRSF015589">
    <property type="entry name" value="PP_kinase"/>
    <property type="match status" value="1"/>
</dbReference>
<dbReference type="SUPFAM" id="SSF56024">
    <property type="entry name" value="Phospholipase D/nuclease"/>
    <property type="match status" value="2"/>
</dbReference>
<dbReference type="SUPFAM" id="SSF143724">
    <property type="entry name" value="PHP14-like"/>
    <property type="match status" value="1"/>
</dbReference>
<dbReference type="SUPFAM" id="SSF140356">
    <property type="entry name" value="PPK N-terminal domain-like"/>
    <property type="match status" value="1"/>
</dbReference>
<accession>P58991</accession>
<comment type="function">
    <text evidence="1">Catalyzes the reversible transfer of the terminal phosphate of ATP to form a long-chain polyphosphate (polyP).</text>
</comment>
<comment type="catalytic activity">
    <reaction evidence="1">
        <text>[phosphate](n) + ATP = [phosphate](n+1) + ADP</text>
        <dbReference type="Rhea" id="RHEA:19573"/>
        <dbReference type="Rhea" id="RHEA-COMP:9859"/>
        <dbReference type="Rhea" id="RHEA-COMP:14280"/>
        <dbReference type="ChEBI" id="CHEBI:16838"/>
        <dbReference type="ChEBI" id="CHEBI:30616"/>
        <dbReference type="ChEBI" id="CHEBI:456216"/>
        <dbReference type="EC" id="2.7.4.1"/>
    </reaction>
</comment>
<comment type="cofactor">
    <cofactor evidence="1">
        <name>Mg(2+)</name>
        <dbReference type="ChEBI" id="CHEBI:18420"/>
    </cofactor>
</comment>
<comment type="PTM">
    <text evidence="1">An intermediate of this reaction is the autophosphorylated ppk in which a phosphate is covalently linked to a histidine residue through a N-P bond.</text>
</comment>
<comment type="similarity">
    <text evidence="1">Belongs to the polyphosphate kinase 1 (PPK1) family.</text>
</comment>
<sequence length="698" mass="79347">MSDPSLYINRELSWLHFNRRVLDEAIRQDQHPLIERVKFIAIFSSNLDEFFMIRVAGIEKQVEAGIRKKTIDGLTPSEQLERIRAEVIEQLKLRNTCLYGDILPALAAEGITFVHFADLPEKEQAVLNAWFRKEIYPVLTPLAFDTGHPFPFMSNLSLNLAIELDEVEHGNLKFARVKVPSVLPRLLKLNDIEGLGNDPSCMRFLWIEELIQQNLGLLFPTMKIVQSHQFRIIRNADIEIEEDEAGDLLQTIEKGVRSRRYGNVVRLDISPEMPDFVRQLLINNLEIEEKNVYEIDGALGMSCLMELLDIDRPSLKDEPFIPFNMFEEQRNGDIFSAISSGDLLFYHPYDSFKPVVDFIDRAASDPDVLSIKQTLYRVGSNSPIVKALMKAAESGKQVAVLVELKARFDEENNIGWARALEDVGAHVIYGLPGLKTHAKLTLVVRREPQGLKRYLHLGTGNYNPSTGKLYTDYSFFTDDELLAGEVSELFNALTGYFRYTGYRFLLVSPINTRKRIIEMIEREIALARKSSGGRIIMKMNSLVDPATIQALYRASRAGVQIDLVVRGICCLKPGIPGVSENIRVISIIGRYLEHSRAYYFANGGSPELYLGSADIMPRNLDDRVETLFPVFDPSLVERVRNDLELQLSDNLKAWKIGPDGNWTLVRNDAPKVNSQERFMKRRTQKKKTTGIKGRLGLN</sequence>
<gene>
    <name evidence="1" type="primary">ppk1</name>
    <name type="synonym">ppk-1</name>
    <name type="ordered locus">CT0887</name>
</gene>
<reference key="1">
    <citation type="journal article" date="2002" name="Proc. Natl. Acad. Sci. U.S.A.">
        <title>The complete genome sequence of Chlorobium tepidum TLS, a photosynthetic, anaerobic, green-sulfur bacterium.</title>
        <authorList>
            <person name="Eisen J.A."/>
            <person name="Nelson K.E."/>
            <person name="Paulsen I.T."/>
            <person name="Heidelberg J.F."/>
            <person name="Wu M."/>
            <person name="Dodson R.J."/>
            <person name="DeBoy R.T."/>
            <person name="Gwinn M.L."/>
            <person name="Nelson W.C."/>
            <person name="Haft D.H."/>
            <person name="Hickey E.K."/>
            <person name="Peterson J.D."/>
            <person name="Durkin A.S."/>
            <person name="Kolonay J.F."/>
            <person name="Yang F."/>
            <person name="Holt I.E."/>
            <person name="Umayam L.A."/>
            <person name="Mason T.M."/>
            <person name="Brenner M."/>
            <person name="Shea T.P."/>
            <person name="Parksey D.S."/>
            <person name="Nierman W.C."/>
            <person name="Feldblyum T.V."/>
            <person name="Hansen C.L."/>
            <person name="Craven M.B."/>
            <person name="Radune D."/>
            <person name="Vamathevan J.J."/>
            <person name="Khouri H.M."/>
            <person name="White O."/>
            <person name="Gruber T.M."/>
            <person name="Ketchum K.A."/>
            <person name="Venter J.C."/>
            <person name="Tettelin H."/>
            <person name="Bryant D.A."/>
            <person name="Fraser C.M."/>
        </authorList>
    </citation>
    <scope>NUCLEOTIDE SEQUENCE [LARGE SCALE GENOMIC DNA]</scope>
    <source>
        <strain>ATCC 49652 / DSM 12025 / NBRC 103806 / TLS</strain>
    </source>
</reference>
<keyword id="KW-0067">ATP-binding</keyword>
<keyword id="KW-0418">Kinase</keyword>
<keyword id="KW-0460">Magnesium</keyword>
<keyword id="KW-0479">Metal-binding</keyword>
<keyword id="KW-0547">Nucleotide-binding</keyword>
<keyword id="KW-0597">Phosphoprotein</keyword>
<keyword id="KW-1185">Reference proteome</keyword>
<keyword id="KW-0808">Transferase</keyword>
<organism>
    <name type="scientific">Chlorobaculum tepidum (strain ATCC 49652 / DSM 12025 / NBRC 103806 / TLS)</name>
    <name type="common">Chlorobium tepidum</name>
    <dbReference type="NCBI Taxonomy" id="194439"/>
    <lineage>
        <taxon>Bacteria</taxon>
        <taxon>Pseudomonadati</taxon>
        <taxon>Chlorobiota</taxon>
        <taxon>Chlorobiia</taxon>
        <taxon>Chlorobiales</taxon>
        <taxon>Chlorobiaceae</taxon>
        <taxon>Chlorobaculum</taxon>
    </lineage>
</organism>
<protein>
    <recommendedName>
        <fullName evidence="1">Polyphosphate kinase 1</fullName>
        <ecNumber evidence="1">2.7.4.1</ecNumber>
    </recommendedName>
    <alternativeName>
        <fullName evidence="1">ATP-polyphosphate phosphotransferase 1</fullName>
    </alternativeName>
    <alternativeName>
        <fullName evidence="1">Polyphosphoric acid kinase 1</fullName>
    </alternativeName>
</protein>
<proteinExistence type="inferred from homology"/>
<evidence type="ECO:0000255" key="1">
    <source>
        <dbReference type="HAMAP-Rule" id="MF_00347"/>
    </source>
</evidence>